<proteinExistence type="inferred from homology"/>
<organism>
    <name type="scientific">Burkholderia orbicola (strain AU 1054)</name>
    <dbReference type="NCBI Taxonomy" id="331271"/>
    <lineage>
        <taxon>Bacteria</taxon>
        <taxon>Pseudomonadati</taxon>
        <taxon>Pseudomonadota</taxon>
        <taxon>Betaproteobacteria</taxon>
        <taxon>Burkholderiales</taxon>
        <taxon>Burkholderiaceae</taxon>
        <taxon>Burkholderia</taxon>
        <taxon>Burkholderia cepacia complex</taxon>
        <taxon>Burkholderia orbicola</taxon>
    </lineage>
</organism>
<keyword id="KW-0489">Methyltransferase</keyword>
<keyword id="KW-0949">S-adenosyl-L-methionine</keyword>
<keyword id="KW-0808">Transferase</keyword>
<keyword id="KW-0831">Ubiquinone biosynthesis</keyword>
<name>UBIG_BURO1</name>
<sequence>MTNADPHELQKFSDLAHRWWDPNAEFKPLHDLNPVRLGWIDAHAHLAGKRALDIGCGGGILSESMAGLGAQVKGIDLSTEALGVADLHSLESGISVEYEAIAAEAIAAREPGTYDVVTCMEMLEHVPSPGDIVAACATLVKPGGWVFFSTLNRNLKSYLFAVIGAEYIAQMLPKGTHDYARFIRPSELASFVRATDLHIVEIKGITYHPIGKRFALSNDTDINYLVACRRGA</sequence>
<reference key="1">
    <citation type="submission" date="2006-05" db="EMBL/GenBank/DDBJ databases">
        <title>Complete sequence of chromosome 1 of Burkholderia cenocepacia AU 1054.</title>
        <authorList>
            <consortium name="US DOE Joint Genome Institute"/>
            <person name="Copeland A."/>
            <person name="Lucas S."/>
            <person name="Lapidus A."/>
            <person name="Barry K."/>
            <person name="Detter J.C."/>
            <person name="Glavina del Rio T."/>
            <person name="Hammon N."/>
            <person name="Israni S."/>
            <person name="Dalin E."/>
            <person name="Tice H."/>
            <person name="Pitluck S."/>
            <person name="Chain P."/>
            <person name="Malfatti S."/>
            <person name="Shin M."/>
            <person name="Vergez L."/>
            <person name="Schmutz J."/>
            <person name="Larimer F."/>
            <person name="Land M."/>
            <person name="Hauser L."/>
            <person name="Kyrpides N."/>
            <person name="Lykidis A."/>
            <person name="LiPuma J.J."/>
            <person name="Konstantinidis K."/>
            <person name="Tiedje J.M."/>
            <person name="Richardson P."/>
        </authorList>
    </citation>
    <scope>NUCLEOTIDE SEQUENCE [LARGE SCALE GENOMIC DNA]</scope>
    <source>
        <strain>AU 1054</strain>
    </source>
</reference>
<comment type="function">
    <text evidence="1">O-methyltransferase that catalyzes the 2 O-methylation steps in the ubiquinone biosynthetic pathway.</text>
</comment>
<comment type="catalytic activity">
    <reaction evidence="1">
        <text>a 3-demethylubiquinol + S-adenosyl-L-methionine = a ubiquinol + S-adenosyl-L-homocysteine + H(+)</text>
        <dbReference type="Rhea" id="RHEA:44380"/>
        <dbReference type="Rhea" id="RHEA-COMP:9566"/>
        <dbReference type="Rhea" id="RHEA-COMP:10914"/>
        <dbReference type="ChEBI" id="CHEBI:15378"/>
        <dbReference type="ChEBI" id="CHEBI:17976"/>
        <dbReference type="ChEBI" id="CHEBI:57856"/>
        <dbReference type="ChEBI" id="CHEBI:59789"/>
        <dbReference type="ChEBI" id="CHEBI:84422"/>
        <dbReference type="EC" id="2.1.1.64"/>
    </reaction>
</comment>
<comment type="catalytic activity">
    <reaction evidence="1">
        <text>a 3-(all-trans-polyprenyl)benzene-1,2-diol + S-adenosyl-L-methionine = a 2-methoxy-6-(all-trans-polyprenyl)phenol + S-adenosyl-L-homocysteine + H(+)</text>
        <dbReference type="Rhea" id="RHEA:31411"/>
        <dbReference type="Rhea" id="RHEA-COMP:9550"/>
        <dbReference type="Rhea" id="RHEA-COMP:9551"/>
        <dbReference type="ChEBI" id="CHEBI:15378"/>
        <dbReference type="ChEBI" id="CHEBI:57856"/>
        <dbReference type="ChEBI" id="CHEBI:59789"/>
        <dbReference type="ChEBI" id="CHEBI:62729"/>
        <dbReference type="ChEBI" id="CHEBI:62731"/>
        <dbReference type="EC" id="2.1.1.222"/>
    </reaction>
</comment>
<comment type="pathway">
    <text evidence="1">Cofactor biosynthesis; ubiquinone biosynthesis.</text>
</comment>
<comment type="similarity">
    <text evidence="1">Belongs to the methyltransferase superfamily. UbiG/COQ3 family.</text>
</comment>
<feature type="chain" id="PRO_1000013893" description="Ubiquinone biosynthesis O-methyltransferase">
    <location>
        <begin position="1"/>
        <end position="232"/>
    </location>
</feature>
<feature type="binding site" evidence="1">
    <location>
        <position position="36"/>
    </location>
    <ligand>
        <name>S-adenosyl-L-methionine</name>
        <dbReference type="ChEBI" id="CHEBI:59789"/>
    </ligand>
</feature>
<feature type="binding site" evidence="1">
    <location>
        <position position="55"/>
    </location>
    <ligand>
        <name>S-adenosyl-L-methionine</name>
        <dbReference type="ChEBI" id="CHEBI:59789"/>
    </ligand>
</feature>
<feature type="binding site" evidence="1">
    <location>
        <position position="76"/>
    </location>
    <ligand>
        <name>S-adenosyl-L-methionine</name>
        <dbReference type="ChEBI" id="CHEBI:59789"/>
    </ligand>
</feature>
<feature type="binding site" evidence="1">
    <location>
        <position position="120"/>
    </location>
    <ligand>
        <name>S-adenosyl-L-methionine</name>
        <dbReference type="ChEBI" id="CHEBI:59789"/>
    </ligand>
</feature>
<accession>Q1BY35</accession>
<evidence type="ECO:0000255" key="1">
    <source>
        <dbReference type="HAMAP-Rule" id="MF_00472"/>
    </source>
</evidence>
<dbReference type="EC" id="2.1.1.222" evidence="1"/>
<dbReference type="EC" id="2.1.1.64" evidence="1"/>
<dbReference type="EMBL" id="CP000378">
    <property type="protein sequence ID" value="ABF75470.1"/>
    <property type="molecule type" value="Genomic_DNA"/>
</dbReference>
<dbReference type="SMR" id="Q1BY35"/>
<dbReference type="HOGENOM" id="CLU_042432_5_0_4"/>
<dbReference type="UniPathway" id="UPA00232"/>
<dbReference type="GO" id="GO:0102208">
    <property type="term" value="F:2-polyprenyl-6-hydroxyphenol methylase activity"/>
    <property type="evidence" value="ECO:0007669"/>
    <property type="project" value="UniProtKB-EC"/>
</dbReference>
<dbReference type="GO" id="GO:0061542">
    <property type="term" value="F:3-demethylubiquinol 3-O-methyltransferase activity"/>
    <property type="evidence" value="ECO:0007669"/>
    <property type="project" value="UniProtKB-UniRule"/>
</dbReference>
<dbReference type="GO" id="GO:0010420">
    <property type="term" value="F:polyprenyldihydroxybenzoate methyltransferase activity"/>
    <property type="evidence" value="ECO:0007669"/>
    <property type="project" value="InterPro"/>
</dbReference>
<dbReference type="GO" id="GO:0032259">
    <property type="term" value="P:methylation"/>
    <property type="evidence" value="ECO:0007669"/>
    <property type="project" value="UniProtKB-KW"/>
</dbReference>
<dbReference type="CDD" id="cd02440">
    <property type="entry name" value="AdoMet_MTases"/>
    <property type="match status" value="1"/>
</dbReference>
<dbReference type="FunFam" id="3.40.50.150:FF:000028">
    <property type="entry name" value="Ubiquinone biosynthesis O-methyltransferase"/>
    <property type="match status" value="1"/>
</dbReference>
<dbReference type="Gene3D" id="3.40.50.150">
    <property type="entry name" value="Vaccinia Virus protein VP39"/>
    <property type="match status" value="1"/>
</dbReference>
<dbReference type="HAMAP" id="MF_00472">
    <property type="entry name" value="UbiG"/>
    <property type="match status" value="1"/>
</dbReference>
<dbReference type="InterPro" id="IPR029063">
    <property type="entry name" value="SAM-dependent_MTases_sf"/>
</dbReference>
<dbReference type="InterPro" id="IPR010233">
    <property type="entry name" value="UbiG_MeTrfase"/>
</dbReference>
<dbReference type="NCBIfam" id="TIGR01983">
    <property type="entry name" value="UbiG"/>
    <property type="match status" value="1"/>
</dbReference>
<dbReference type="PANTHER" id="PTHR43464">
    <property type="entry name" value="METHYLTRANSFERASE"/>
    <property type="match status" value="1"/>
</dbReference>
<dbReference type="PANTHER" id="PTHR43464:SF19">
    <property type="entry name" value="UBIQUINONE BIOSYNTHESIS O-METHYLTRANSFERASE, MITOCHONDRIAL"/>
    <property type="match status" value="1"/>
</dbReference>
<dbReference type="Pfam" id="PF13489">
    <property type="entry name" value="Methyltransf_23"/>
    <property type="match status" value="1"/>
</dbReference>
<dbReference type="SUPFAM" id="SSF53335">
    <property type="entry name" value="S-adenosyl-L-methionine-dependent methyltransferases"/>
    <property type="match status" value="1"/>
</dbReference>
<gene>
    <name evidence="1" type="primary">ubiG</name>
    <name type="ordered locus">Bcen_0559</name>
</gene>
<protein>
    <recommendedName>
        <fullName evidence="1">Ubiquinone biosynthesis O-methyltransferase</fullName>
    </recommendedName>
    <alternativeName>
        <fullName evidence="1">2-polyprenyl-6-hydroxyphenol methylase</fullName>
        <ecNumber evidence="1">2.1.1.222</ecNumber>
    </alternativeName>
    <alternativeName>
        <fullName evidence="1">3-demethylubiquinone 3-O-methyltransferase</fullName>
        <ecNumber evidence="1">2.1.1.64</ecNumber>
    </alternativeName>
</protein>